<evidence type="ECO:0000255" key="1">
    <source>
        <dbReference type="HAMAP-Rule" id="MF_00735"/>
    </source>
</evidence>
<organism>
    <name type="scientific">Helicobacter acinonychis (strain Sheeba)</name>
    <dbReference type="NCBI Taxonomy" id="382638"/>
    <lineage>
        <taxon>Bacteria</taxon>
        <taxon>Pseudomonadati</taxon>
        <taxon>Campylobacterota</taxon>
        <taxon>Epsilonproteobacteria</taxon>
        <taxon>Campylobacterales</taxon>
        <taxon>Helicobacteraceae</taxon>
        <taxon>Helicobacter</taxon>
    </lineage>
</organism>
<protein>
    <recommendedName>
        <fullName evidence="1">Ribosomal protein L11 methyltransferase</fullName>
        <shortName evidence="1">L11 Mtase</shortName>
        <ecNumber evidence="1">2.1.1.-</ecNumber>
    </recommendedName>
</protein>
<name>PRMA_HELAH</name>
<keyword id="KW-0963">Cytoplasm</keyword>
<keyword id="KW-0489">Methyltransferase</keyword>
<keyword id="KW-0949">S-adenosyl-L-methionine</keyword>
<keyword id="KW-0808">Transferase</keyword>
<proteinExistence type="inferred from homology"/>
<sequence>MLESMYYEFFFIFPKERELFESFLLDATDLALEESSLEDLKAFDDKETIGFISQSSWRYFATHGPLKEDLKEKLPHLDHFVILRSEKDLNSSLIPALESFCLSLQENLQNEFDFFYLSRNLASKDWLEAYKQAILPVQCGKFYIHPSWHQKPSHIATDFSIMIDPALAFGSGHHESTSMCLELLSNLDLKHKNALDVGCGSGILSIALKKQGVSTLVACDTDSLAIEETLKNFSLNQISLSTQDEIICGSTQKIQGHFDIIVANIVADVIKSLYSEFVRLCNHTLILSGILETHLNSVLQIYYNGFEILEQQQRNEWVALKLLKKQSIN</sequence>
<accession>Q17WN8</accession>
<dbReference type="EC" id="2.1.1.-" evidence="1"/>
<dbReference type="EMBL" id="AM260522">
    <property type="protein sequence ID" value="CAJ99938.1"/>
    <property type="molecule type" value="Genomic_DNA"/>
</dbReference>
<dbReference type="RefSeq" id="WP_011578045.1">
    <property type="nucleotide sequence ID" value="NC_008229.1"/>
</dbReference>
<dbReference type="SMR" id="Q17WN8"/>
<dbReference type="STRING" id="382638.Hac_1179"/>
<dbReference type="GeneID" id="31758531"/>
<dbReference type="KEGG" id="hac:Hac_1179"/>
<dbReference type="eggNOG" id="COG2264">
    <property type="taxonomic scope" value="Bacteria"/>
</dbReference>
<dbReference type="HOGENOM" id="CLU_049382_1_0_7"/>
<dbReference type="OrthoDB" id="9785995at2"/>
<dbReference type="BioCyc" id="HACI382638:HAC_RS05095-MONOMER"/>
<dbReference type="Proteomes" id="UP000000775">
    <property type="component" value="Chromosome"/>
</dbReference>
<dbReference type="GO" id="GO:0005737">
    <property type="term" value="C:cytoplasm"/>
    <property type="evidence" value="ECO:0007669"/>
    <property type="project" value="UniProtKB-SubCell"/>
</dbReference>
<dbReference type="GO" id="GO:0016279">
    <property type="term" value="F:protein-lysine N-methyltransferase activity"/>
    <property type="evidence" value="ECO:0007669"/>
    <property type="project" value="RHEA"/>
</dbReference>
<dbReference type="GO" id="GO:0032259">
    <property type="term" value="P:methylation"/>
    <property type="evidence" value="ECO:0007669"/>
    <property type="project" value="UniProtKB-KW"/>
</dbReference>
<dbReference type="CDD" id="cd02440">
    <property type="entry name" value="AdoMet_MTases"/>
    <property type="match status" value="1"/>
</dbReference>
<dbReference type="Gene3D" id="3.40.50.150">
    <property type="entry name" value="Vaccinia Virus protein VP39"/>
    <property type="match status" value="1"/>
</dbReference>
<dbReference type="HAMAP" id="MF_00735">
    <property type="entry name" value="Methyltr_PrmA"/>
    <property type="match status" value="1"/>
</dbReference>
<dbReference type="InterPro" id="IPR050078">
    <property type="entry name" value="Ribosomal_L11_MeTrfase_PrmA"/>
</dbReference>
<dbReference type="InterPro" id="IPR004498">
    <property type="entry name" value="Ribosomal_PrmA_MeTrfase"/>
</dbReference>
<dbReference type="InterPro" id="IPR029063">
    <property type="entry name" value="SAM-dependent_MTases_sf"/>
</dbReference>
<dbReference type="NCBIfam" id="TIGR00406">
    <property type="entry name" value="prmA"/>
    <property type="match status" value="1"/>
</dbReference>
<dbReference type="PANTHER" id="PTHR43648">
    <property type="entry name" value="ELECTRON TRANSFER FLAVOPROTEIN BETA SUBUNIT LYSINE METHYLTRANSFERASE"/>
    <property type="match status" value="1"/>
</dbReference>
<dbReference type="PANTHER" id="PTHR43648:SF1">
    <property type="entry name" value="ELECTRON TRANSFER FLAVOPROTEIN BETA SUBUNIT LYSINE METHYLTRANSFERASE"/>
    <property type="match status" value="1"/>
</dbReference>
<dbReference type="Pfam" id="PF06325">
    <property type="entry name" value="PrmA"/>
    <property type="match status" value="1"/>
</dbReference>
<dbReference type="PIRSF" id="PIRSF000401">
    <property type="entry name" value="RPL11_MTase"/>
    <property type="match status" value="1"/>
</dbReference>
<dbReference type="SUPFAM" id="SSF53335">
    <property type="entry name" value="S-adenosyl-L-methionine-dependent methyltransferases"/>
    <property type="match status" value="1"/>
</dbReference>
<gene>
    <name evidence="1" type="primary">prmA</name>
    <name type="ordered locus">Hac_1179</name>
</gene>
<reference key="1">
    <citation type="journal article" date="2006" name="PLoS Genet.">
        <title>Who ate whom? Adaptive Helicobacter genomic changes that accompanied a host jump from early humans to large felines.</title>
        <authorList>
            <person name="Eppinger M."/>
            <person name="Baar C."/>
            <person name="Linz B."/>
            <person name="Raddatz G."/>
            <person name="Lanz C."/>
            <person name="Keller H."/>
            <person name="Morelli G."/>
            <person name="Gressmann H."/>
            <person name="Achtman M."/>
            <person name="Schuster S.C."/>
        </authorList>
    </citation>
    <scope>NUCLEOTIDE SEQUENCE [LARGE SCALE GENOMIC DNA]</scope>
    <source>
        <strain>Sheeba</strain>
    </source>
</reference>
<comment type="function">
    <text evidence="1">Methylates ribosomal protein L11.</text>
</comment>
<comment type="catalytic activity">
    <reaction evidence="1">
        <text>L-lysyl-[protein] + 3 S-adenosyl-L-methionine = N(6),N(6),N(6)-trimethyl-L-lysyl-[protein] + 3 S-adenosyl-L-homocysteine + 3 H(+)</text>
        <dbReference type="Rhea" id="RHEA:54192"/>
        <dbReference type="Rhea" id="RHEA-COMP:9752"/>
        <dbReference type="Rhea" id="RHEA-COMP:13826"/>
        <dbReference type="ChEBI" id="CHEBI:15378"/>
        <dbReference type="ChEBI" id="CHEBI:29969"/>
        <dbReference type="ChEBI" id="CHEBI:57856"/>
        <dbReference type="ChEBI" id="CHEBI:59789"/>
        <dbReference type="ChEBI" id="CHEBI:61961"/>
    </reaction>
</comment>
<comment type="subcellular location">
    <subcellularLocation>
        <location evidence="1">Cytoplasm</location>
    </subcellularLocation>
</comment>
<comment type="similarity">
    <text evidence="1">Belongs to the methyltransferase superfamily. PrmA family.</text>
</comment>
<feature type="chain" id="PRO_1000192634" description="Ribosomal protein L11 methyltransferase">
    <location>
        <begin position="1"/>
        <end position="329"/>
    </location>
</feature>
<feature type="binding site" evidence="1">
    <location>
        <position position="177"/>
    </location>
    <ligand>
        <name>S-adenosyl-L-methionine</name>
        <dbReference type="ChEBI" id="CHEBI:59789"/>
    </ligand>
</feature>
<feature type="binding site" evidence="1">
    <location>
        <position position="198"/>
    </location>
    <ligand>
        <name>S-adenosyl-L-methionine</name>
        <dbReference type="ChEBI" id="CHEBI:59789"/>
    </ligand>
</feature>
<feature type="binding site" evidence="1">
    <location>
        <position position="220"/>
    </location>
    <ligand>
        <name>S-adenosyl-L-methionine</name>
        <dbReference type="ChEBI" id="CHEBI:59789"/>
    </ligand>
</feature>
<feature type="binding site" evidence="1">
    <location>
        <position position="264"/>
    </location>
    <ligand>
        <name>S-adenosyl-L-methionine</name>
        <dbReference type="ChEBI" id="CHEBI:59789"/>
    </ligand>
</feature>